<proteinExistence type="evidence at transcript level"/>
<protein>
    <recommendedName>
        <fullName>Transcriptional regulator Myc-A</fullName>
        <shortName>c-Myc-A</shortName>
        <shortName>zc-Myc</shortName>
    </recommendedName>
</protein>
<accession>P52160</accession>
<accession>Q7T2P1</accession>
<evidence type="ECO:0000250" key="1"/>
<evidence type="ECO:0000250" key="2">
    <source>
        <dbReference type="UniProtKB" id="P01106"/>
    </source>
</evidence>
<evidence type="ECO:0000255" key="3">
    <source>
        <dbReference type="PROSITE-ProRule" id="PRU00981"/>
    </source>
</evidence>
<evidence type="ECO:0000256" key="4">
    <source>
        <dbReference type="SAM" id="MobiDB-lite"/>
    </source>
</evidence>
<evidence type="ECO:0000269" key="5">
    <source>
    </source>
</evidence>
<evidence type="ECO:0000303" key="6">
    <source>
    </source>
</evidence>
<evidence type="ECO:0000305" key="7"/>
<evidence type="ECO:0000305" key="8">
    <source>
    </source>
</evidence>
<name>MYCA_DANRE</name>
<gene>
    <name type="primary">myca</name>
    <name type="synonym">cmyc</name>
    <name type="synonym">myc</name>
</gene>
<organism>
    <name type="scientific">Danio rerio</name>
    <name type="common">Zebrafish</name>
    <name type="synonym">Brachydanio rerio</name>
    <dbReference type="NCBI Taxonomy" id="7955"/>
    <lineage>
        <taxon>Eukaryota</taxon>
        <taxon>Metazoa</taxon>
        <taxon>Chordata</taxon>
        <taxon>Craniata</taxon>
        <taxon>Vertebrata</taxon>
        <taxon>Euteleostomi</taxon>
        <taxon>Actinopterygii</taxon>
        <taxon>Neopterygii</taxon>
        <taxon>Teleostei</taxon>
        <taxon>Ostariophysi</taxon>
        <taxon>Cypriniformes</taxon>
        <taxon>Danionidae</taxon>
        <taxon>Danioninae</taxon>
        <taxon>Danio</taxon>
    </lineage>
</organism>
<keyword id="KW-0010">Activator</keyword>
<keyword id="KW-0024">Alternative initiation</keyword>
<keyword id="KW-0238">DNA-binding</keyword>
<keyword id="KW-0325">Glycoprotein</keyword>
<keyword id="KW-0539">Nucleus</keyword>
<keyword id="KW-0656">Proto-oncogene</keyword>
<keyword id="KW-1185">Reference proteome</keyword>
<keyword id="KW-0804">Transcription</keyword>
<keyword id="KW-0805">Transcription regulation</keyword>
<dbReference type="EMBL" id="L11710">
    <property type="protein sequence ID" value="AAA02482.1"/>
    <property type="molecule type" value="mRNA"/>
</dbReference>
<dbReference type="EMBL" id="BC053281">
    <property type="protein sequence ID" value="AAH53281.1"/>
    <property type="molecule type" value="mRNA"/>
</dbReference>
<dbReference type="PIR" id="A48059">
    <property type="entry name" value="A48059"/>
</dbReference>
<dbReference type="RefSeq" id="NP_571487.2">
    <molecule id="P52160-1"/>
    <property type="nucleotide sequence ID" value="NM_131412.1"/>
</dbReference>
<dbReference type="SMR" id="P52160"/>
<dbReference type="FunCoup" id="P52160">
    <property type="interactions" value="1738"/>
</dbReference>
<dbReference type="STRING" id="7955.ENSDARP00000100455"/>
<dbReference type="GlyCosmos" id="P52160">
    <property type="glycosylation" value="1 site, No reported glycans"/>
</dbReference>
<dbReference type="PaxDb" id="7955-ENSDARP00000100455"/>
<dbReference type="GeneID" id="30686"/>
<dbReference type="KEGG" id="dre:30686"/>
<dbReference type="AGR" id="ZFIN:ZDB-GENE-990415-162"/>
<dbReference type="CTD" id="30686"/>
<dbReference type="ZFIN" id="ZDB-GENE-990415-162">
    <property type="gene designation" value="myca"/>
</dbReference>
<dbReference type="eggNOG" id="KOG2483">
    <property type="taxonomic scope" value="Eukaryota"/>
</dbReference>
<dbReference type="InParanoid" id="P52160"/>
<dbReference type="OrthoDB" id="5964374at2759"/>
<dbReference type="PhylomeDB" id="P52160"/>
<dbReference type="SignaLink" id="P52160"/>
<dbReference type="PRO" id="PR:P52160"/>
<dbReference type="Proteomes" id="UP000000437">
    <property type="component" value="Chromosome 24"/>
</dbReference>
<dbReference type="GO" id="GO:0005634">
    <property type="term" value="C:nucleus"/>
    <property type="evidence" value="ECO:0000250"/>
    <property type="project" value="UniProtKB"/>
</dbReference>
<dbReference type="GO" id="GO:0003677">
    <property type="term" value="F:DNA binding"/>
    <property type="evidence" value="ECO:0000250"/>
    <property type="project" value="UniProtKB"/>
</dbReference>
<dbReference type="GO" id="GO:0000981">
    <property type="term" value="F:DNA-binding transcription factor activity, RNA polymerase II-specific"/>
    <property type="evidence" value="ECO:0000250"/>
    <property type="project" value="UniProtKB"/>
</dbReference>
<dbReference type="GO" id="GO:0046983">
    <property type="term" value="F:protein dimerization activity"/>
    <property type="evidence" value="ECO:0007669"/>
    <property type="project" value="InterPro"/>
</dbReference>
<dbReference type="GO" id="GO:0000978">
    <property type="term" value="F:RNA polymerase II cis-regulatory region sequence-specific DNA binding"/>
    <property type="evidence" value="ECO:0000318"/>
    <property type="project" value="GO_Central"/>
</dbReference>
<dbReference type="GO" id="GO:0060218">
    <property type="term" value="P:hematopoietic stem cell differentiation"/>
    <property type="evidence" value="ECO:0000316"/>
    <property type="project" value="ZFIN"/>
</dbReference>
<dbReference type="GO" id="GO:0008284">
    <property type="term" value="P:positive regulation of cell population proliferation"/>
    <property type="evidence" value="ECO:0000318"/>
    <property type="project" value="GO_Central"/>
</dbReference>
<dbReference type="GO" id="GO:0006357">
    <property type="term" value="P:regulation of transcription by RNA polymerase II"/>
    <property type="evidence" value="ECO:0000318"/>
    <property type="project" value="GO_Central"/>
</dbReference>
<dbReference type="GO" id="GO:1901342">
    <property type="term" value="P:regulation of vasculature development"/>
    <property type="evidence" value="ECO:0000316"/>
    <property type="project" value="ZFIN"/>
</dbReference>
<dbReference type="GO" id="GO:0001944">
    <property type="term" value="P:vasculature development"/>
    <property type="evidence" value="ECO:0000315"/>
    <property type="project" value="ZFIN"/>
</dbReference>
<dbReference type="CDD" id="cd11458">
    <property type="entry name" value="bHLHzip_c-Myc"/>
    <property type="match status" value="1"/>
</dbReference>
<dbReference type="FunFam" id="4.10.280.10:FF:000019">
    <property type="entry name" value="Myc proto-oncogene protein"/>
    <property type="match status" value="1"/>
</dbReference>
<dbReference type="Gene3D" id="4.10.280.10">
    <property type="entry name" value="Helix-loop-helix DNA-binding domain"/>
    <property type="match status" value="1"/>
</dbReference>
<dbReference type="InterPro" id="IPR011598">
    <property type="entry name" value="bHLH_dom"/>
</dbReference>
<dbReference type="InterPro" id="IPR036638">
    <property type="entry name" value="HLH_DNA-bd_sf"/>
</dbReference>
<dbReference type="InterPro" id="IPR003327">
    <property type="entry name" value="Myc-LZ"/>
</dbReference>
<dbReference type="InterPro" id="IPR050433">
    <property type="entry name" value="Myc_transcription_factors"/>
</dbReference>
<dbReference type="InterPro" id="IPR002418">
    <property type="entry name" value="Tscrpt_reg_Myc"/>
</dbReference>
<dbReference type="InterPro" id="IPR012682">
    <property type="entry name" value="Tscrpt_reg_Myc_N"/>
</dbReference>
<dbReference type="PANTHER" id="PTHR45851">
    <property type="entry name" value="MYC PROTO-ONCOGENE"/>
    <property type="match status" value="1"/>
</dbReference>
<dbReference type="Pfam" id="PF00010">
    <property type="entry name" value="HLH"/>
    <property type="match status" value="1"/>
</dbReference>
<dbReference type="Pfam" id="PF02344">
    <property type="entry name" value="Myc-LZ"/>
    <property type="match status" value="1"/>
</dbReference>
<dbReference type="Pfam" id="PF01056">
    <property type="entry name" value="Myc_N"/>
    <property type="match status" value="1"/>
</dbReference>
<dbReference type="PIRSF" id="PIRSF001705">
    <property type="entry name" value="Myc_protein"/>
    <property type="match status" value="1"/>
</dbReference>
<dbReference type="PRINTS" id="PR00044">
    <property type="entry name" value="LEUZIPPRMYC"/>
</dbReference>
<dbReference type="SMART" id="SM00353">
    <property type="entry name" value="HLH"/>
    <property type="match status" value="1"/>
</dbReference>
<dbReference type="SUPFAM" id="SSF47459">
    <property type="entry name" value="HLH, helix-loop-helix DNA-binding domain"/>
    <property type="match status" value="1"/>
</dbReference>
<dbReference type="PROSITE" id="PS50888">
    <property type="entry name" value="BHLH"/>
    <property type="match status" value="1"/>
</dbReference>
<comment type="function">
    <text evidence="2">Transcription factor that binds DNA in a non-specific manner, yet also specifically recognizes the core sequence 5'-CAC[GA]TG-3'. Activates the transcription of growth-related genes.</text>
</comment>
<comment type="subunit">
    <text evidence="1">Efficient DNA binding requires dimerization with another bHLH protein. Binds DNA as a heterodimer with max (By similarity).</text>
</comment>
<comment type="subcellular location">
    <subcellularLocation>
        <location>Nucleus</location>
    </subcellularLocation>
</comment>
<comment type="alternative products">
    <event type="alternative initiation"/>
    <isoform>
        <id>P52160-1</id>
        <name>2</name>
        <name evidence="6">c-myc 1</name>
        <sequence type="displayed"/>
    </isoform>
    <isoform>
        <id>P52160-2</id>
        <name>1</name>
        <name evidence="6">c-myc 2</name>
        <sequence type="described" ref="VSP_061787"/>
    </isoform>
</comment>
<comment type="tissue specificity">
    <text evidence="5">High levels are seen in the kidney, gills and uterus.</text>
</comment>
<comment type="developmental stage">
    <text evidence="5">Found in low abundance in the two-cell through early somite stages (&lt;1.5 through 12 hours) and increases during later stages of growth and organ development.</text>
</comment>
<comment type="domain">
    <text evidence="2">The 9aaTAD motif is a transactivation domain present in a large number of yeast and animal transcription factors.</text>
</comment>
<comment type="miscellaneous">
    <text evidence="8">Alternative translation initiation from an upstream, in-frame non-ATG (CTG) codon or a downstream ATG start site results in the production of 2 isoforms with distinct N-termini, shown in this entry as isoform 2 and isoform 1, respectively.</text>
</comment>
<comment type="miscellaneous">
    <molecule>Isoform 2</molecule>
    <text evidence="8">Produced by alternative translation initiation from a CTG codon, which is translated as Met.</text>
</comment>
<reference key="1">
    <citation type="journal article" date="1993" name="Mol. Cell. Biol.">
        <title>Zebra fish myc family and max genes: differential expression and oncogenic activity throughout vertebrate evolution.</title>
        <authorList>
            <person name="Schreiber-Agus N."/>
            <person name="Horner J."/>
            <person name="Torres R."/>
            <person name="Chiu F.-C."/>
            <person name="DePinho R.A."/>
        </authorList>
    </citation>
    <scope>NUCLEOTIDE SEQUENCE [MRNA] (ISOFORM 1)</scope>
    <scope>TISSUE SPECIFICITY</scope>
    <scope>DEVELOPMENTAL STAGE</scope>
    <source>
        <tissue>Embryo</tissue>
    </source>
</reference>
<reference key="2">
    <citation type="submission" date="2003-06" db="EMBL/GenBank/DDBJ databases">
        <authorList>
            <consortium name="NIH - Zebrafish Gene Collection (ZGC) project"/>
        </authorList>
    </citation>
    <scope>NUCLEOTIDE SEQUENCE [LARGE SCALE MRNA] (ISOFORM 1)</scope>
    <source>
        <tissue>Kidney</tissue>
    </source>
</reference>
<reference key="3">
    <citation type="journal article" date="1988" name="Cell">
        <title>A non-AUG translational initiation in c-myc exon 1 generates an N-terminally distinct protein whose synthesis is disrupted in Burkitt's lymphomas.</title>
        <authorList>
            <person name="Hann S.R."/>
            <person name="King M.W."/>
            <person name="Bentley D.L."/>
            <person name="Anderson C.W."/>
            <person name="Eisenman R.N."/>
        </authorList>
    </citation>
    <scope>ALTERNATIVE TRANSLATION INITIATION</scope>
</reference>
<sequence length="419" mass="47994">MERHSLNTSVKMPVSASLACKNYDYDYDSIQPYFYFDNDDEDFYHHQQGQTQPSAPSEDIWKKFELLPTPPLSPSRRQSLSTAEQLEMVSEFLGDDVVSQSFICDDADYSQSFIKSIIIQDCMWSGFSAAAKLEKVVSERLASLHAERKELMSDSNSNRLNASYLQDLSTSASECIDPSVVFPYPLTECGKAGKVASPQPMLVLDTPPNSSSSSGSDSEDEEEEDEEEEEEEEEEEEEEEEEEIDVVTVEKRQKRHETDASESRYPSPLVLKRCHVSTHQHNYAAHPSTRHDQPAVKRLRLEASNNHSINSSSSNRHVKQRKCASPRTSDSEDNDKRRTHNVLERQRRNELKLSFFALRDEIPEVANNEKAAKVVILKKATECIHSMQLDEQRLLSIKEQLRRKSEQLKHRLQQLRSSH</sequence>
<feature type="chain" id="PRO_0000127314" description="Transcriptional regulator Myc-A">
    <location>
        <begin position="1"/>
        <end position="419"/>
    </location>
</feature>
<feature type="domain" description="bHLH" evidence="3">
    <location>
        <begin position="335"/>
        <end position="387"/>
    </location>
</feature>
<feature type="region of interest" description="Disordered" evidence="4">
    <location>
        <begin position="199"/>
        <end position="269"/>
    </location>
</feature>
<feature type="region of interest" description="Disordered" evidence="4">
    <location>
        <begin position="305"/>
        <end position="343"/>
    </location>
</feature>
<feature type="region of interest" description="Leucine-zipper">
    <location>
        <begin position="394"/>
        <end position="415"/>
    </location>
</feature>
<feature type="short sequence motif" description="9aaTAD" evidence="2">
    <location>
        <begin position="87"/>
        <end position="95"/>
    </location>
</feature>
<feature type="compositionally biased region" description="Acidic residues" evidence="4">
    <location>
        <begin position="217"/>
        <end position="245"/>
    </location>
</feature>
<feature type="compositionally biased region" description="Basic and acidic residues" evidence="4">
    <location>
        <begin position="248"/>
        <end position="262"/>
    </location>
</feature>
<feature type="compositionally biased region" description="Low complexity" evidence="4">
    <location>
        <begin position="305"/>
        <end position="315"/>
    </location>
</feature>
<feature type="glycosylation site" description="O-linked (GlcNAc) threonine" evidence="1">
    <location>
        <position position="69"/>
    </location>
</feature>
<feature type="splice variant" id="VSP_061787" description="In isoform 1.">
    <location>
        <begin position="1"/>
        <end position="11"/>
    </location>
</feature>
<feature type="sequence conflict" description="In Ref. 1; AAA02482." evidence="7" ref="1">
    <original>D</original>
    <variation>H</variation>
    <location>
        <position position="205"/>
    </location>
</feature>
<feature type="sequence conflict" description="In Ref. 1; AAA02482." evidence="7" ref="1">
    <location>
        <begin position="226"/>
        <end position="228"/>
    </location>
</feature>
<feature type="sequence conflict" description="In Ref. 1; AAA02482." evidence="7" ref="1">
    <original>S</original>
    <variation>SS</variation>
    <location>
        <position position="314"/>
    </location>
</feature>
<feature type="sequence conflict" description="In Ref. 1; AAA02482." evidence="7" ref="1">
    <original>Q</original>
    <variation>R</variation>
    <location>
        <position position="414"/>
    </location>
</feature>